<accession>A8NCK4</accession>
<gene>
    <name evidence="6" type="primary">COX1</name>
    <name type="ORF">CC1G_03562</name>
</gene>
<evidence type="ECO:0000250" key="1">
    <source>
        <dbReference type="UniProtKB" id="P04798"/>
    </source>
</evidence>
<evidence type="ECO:0000255" key="2"/>
<evidence type="ECO:0000255" key="3">
    <source>
        <dbReference type="PROSITE-ProRule" id="PRU00498"/>
    </source>
</evidence>
<evidence type="ECO:0000269" key="4">
    <source>
    </source>
</evidence>
<evidence type="ECO:0000269" key="5">
    <source>
    </source>
</evidence>
<evidence type="ECO:0000303" key="6">
    <source>
    </source>
</evidence>
<evidence type="ECO:0000305" key="7"/>
<protein>
    <recommendedName>
        <fullName evidence="6">Cytochrome P450 monooxygenase COX1</fullName>
        <ecNumber evidence="4">1.-.-.-</ecNumber>
    </recommendedName>
    <alternativeName>
        <fullName evidence="6">Alpha-cuprenene oxidase 1</fullName>
    </alternativeName>
</protein>
<name>COX1_COPC7</name>
<dbReference type="EC" id="1.-.-.-" evidence="4"/>
<dbReference type="EMBL" id="AACS02000009">
    <property type="protein sequence ID" value="EAU89297.2"/>
    <property type="molecule type" value="Genomic_DNA"/>
</dbReference>
<dbReference type="RefSeq" id="XP_001832548.2">
    <property type="nucleotide sequence ID" value="XM_001832496.2"/>
</dbReference>
<dbReference type="SMR" id="A8NCK4"/>
<dbReference type="GlyCosmos" id="A8NCK4">
    <property type="glycosylation" value="6 sites, No reported glycans"/>
</dbReference>
<dbReference type="GeneID" id="6009035"/>
<dbReference type="KEGG" id="cci:CC1G_03562"/>
<dbReference type="VEuPathDB" id="FungiDB:CC1G_03562"/>
<dbReference type="eggNOG" id="KOG0156">
    <property type="taxonomic scope" value="Eukaryota"/>
</dbReference>
<dbReference type="HOGENOM" id="CLU_001570_2_3_1"/>
<dbReference type="InParanoid" id="A8NCK4"/>
<dbReference type="OMA" id="YHVPKHA"/>
<dbReference type="OrthoDB" id="2789670at2759"/>
<dbReference type="Proteomes" id="UP000001861">
    <property type="component" value="Unassembled WGS sequence"/>
</dbReference>
<dbReference type="GO" id="GO:0016020">
    <property type="term" value="C:membrane"/>
    <property type="evidence" value="ECO:0007669"/>
    <property type="project" value="UniProtKB-SubCell"/>
</dbReference>
<dbReference type="GO" id="GO:0020037">
    <property type="term" value="F:heme binding"/>
    <property type="evidence" value="ECO:0007669"/>
    <property type="project" value="InterPro"/>
</dbReference>
<dbReference type="GO" id="GO:0005506">
    <property type="term" value="F:iron ion binding"/>
    <property type="evidence" value="ECO:0007669"/>
    <property type="project" value="InterPro"/>
</dbReference>
<dbReference type="GO" id="GO:0004497">
    <property type="term" value="F:monooxygenase activity"/>
    <property type="evidence" value="ECO:0007669"/>
    <property type="project" value="UniProtKB-KW"/>
</dbReference>
<dbReference type="GO" id="GO:0016705">
    <property type="term" value="F:oxidoreductase activity, acting on paired donors, with incorporation or reduction of molecular oxygen"/>
    <property type="evidence" value="ECO:0007669"/>
    <property type="project" value="InterPro"/>
</dbReference>
<dbReference type="CDD" id="cd11065">
    <property type="entry name" value="CYP64-like"/>
    <property type="match status" value="1"/>
</dbReference>
<dbReference type="Gene3D" id="1.10.630.10">
    <property type="entry name" value="Cytochrome P450"/>
    <property type="match status" value="1"/>
</dbReference>
<dbReference type="InterPro" id="IPR001128">
    <property type="entry name" value="Cyt_P450"/>
</dbReference>
<dbReference type="InterPro" id="IPR017972">
    <property type="entry name" value="Cyt_P450_CS"/>
</dbReference>
<dbReference type="InterPro" id="IPR002401">
    <property type="entry name" value="Cyt_P450_E_grp-I"/>
</dbReference>
<dbReference type="InterPro" id="IPR036396">
    <property type="entry name" value="Cyt_P450_sf"/>
</dbReference>
<dbReference type="InterPro" id="IPR050364">
    <property type="entry name" value="Cytochrome_P450_fung"/>
</dbReference>
<dbReference type="PANTHER" id="PTHR46300:SF7">
    <property type="entry name" value="P450, PUTATIVE (EUROFUNG)-RELATED"/>
    <property type="match status" value="1"/>
</dbReference>
<dbReference type="PANTHER" id="PTHR46300">
    <property type="entry name" value="P450, PUTATIVE (EUROFUNG)-RELATED-RELATED"/>
    <property type="match status" value="1"/>
</dbReference>
<dbReference type="Pfam" id="PF00067">
    <property type="entry name" value="p450"/>
    <property type="match status" value="1"/>
</dbReference>
<dbReference type="PRINTS" id="PR00463">
    <property type="entry name" value="EP450I"/>
</dbReference>
<dbReference type="SUPFAM" id="SSF48264">
    <property type="entry name" value="Cytochrome P450"/>
    <property type="match status" value="1"/>
</dbReference>
<dbReference type="PROSITE" id="PS00086">
    <property type="entry name" value="CYTOCHROME_P450"/>
    <property type="match status" value="1"/>
</dbReference>
<reference key="1">
    <citation type="journal article" date="2010" name="Proc. Natl. Acad. Sci. U.S.A.">
        <title>Insights into evolution of multicellular fungi from the assembled chromosomes of the mushroom Coprinopsis cinerea (Coprinus cinereus).</title>
        <authorList>
            <person name="Stajich J.E."/>
            <person name="Wilke S.K."/>
            <person name="Ahren D."/>
            <person name="Au C.H."/>
            <person name="Birren B.W."/>
            <person name="Borodovsky M."/>
            <person name="Burns C."/>
            <person name="Canbaeck B."/>
            <person name="Casselton L.A."/>
            <person name="Cheng C.K."/>
            <person name="Deng J."/>
            <person name="Dietrich F.S."/>
            <person name="Fargo D.C."/>
            <person name="Farman M.L."/>
            <person name="Gathman A.C."/>
            <person name="Goldberg J."/>
            <person name="Guigo R."/>
            <person name="Hoegger P.J."/>
            <person name="Hooker J.B."/>
            <person name="Huggins A."/>
            <person name="James T.Y."/>
            <person name="Kamada T."/>
            <person name="Kilaru S."/>
            <person name="Kodira C."/>
            <person name="Kuees U."/>
            <person name="Kupfer D."/>
            <person name="Kwan H.S."/>
            <person name="Lomsadze A."/>
            <person name="Li W."/>
            <person name="Lilly W.W."/>
            <person name="Ma L.-J."/>
            <person name="Mackey A.J."/>
            <person name="Manning G."/>
            <person name="Martin F."/>
            <person name="Muraguchi H."/>
            <person name="Natvig D.O."/>
            <person name="Palmerini H."/>
            <person name="Ramesh M.A."/>
            <person name="Rehmeyer C.J."/>
            <person name="Roe B.A."/>
            <person name="Shenoy N."/>
            <person name="Stanke M."/>
            <person name="Ter-Hovhannisyan V."/>
            <person name="Tunlid A."/>
            <person name="Velagapudi R."/>
            <person name="Vision T.J."/>
            <person name="Zeng Q."/>
            <person name="Zolan M.E."/>
            <person name="Pukkila P.J."/>
        </authorList>
    </citation>
    <scope>NUCLEOTIDE SEQUENCE [LARGE SCALE GENOMIC DNA]</scope>
    <source>
        <strain>Okayama-7 / 130 / ATCC MYA-4618 / FGSC 9003</strain>
    </source>
</reference>
<reference key="2">
    <citation type="journal article" date="2009" name="Mol. Microbiol.">
        <title>Diversity of sesquiterpene synthases in the basidiomycete Coprinus cinereus.</title>
        <authorList>
            <person name="Agger S."/>
            <person name="Lopez-Gallego F."/>
            <person name="Schmidt-Dannert C."/>
        </authorList>
    </citation>
    <scope>FUNCTION</scope>
    <scope>CATALYTIC ACTIVITY</scope>
</reference>
<reference key="3">
    <citation type="journal article" date="2010" name="ChemBioChem">
        <title>Sesquiterpene synthases Cop4 and Cop6 from Coprinus cinereus: catalytic promiscuity and cyclization of farnesyl pyrophosphate geometric isomers.</title>
        <authorList>
            <person name="Lopez-Gallego F."/>
            <person name="Agger S.A."/>
            <person name="Abate-Pella D."/>
            <person name="Distefano M.D."/>
            <person name="Schmidt-Dannert C."/>
        </authorList>
    </citation>
    <scope>FUNCTION</scope>
</reference>
<organism>
    <name type="scientific">Coprinopsis cinerea (strain Okayama-7 / 130 / ATCC MYA-4618 / FGSC 9003)</name>
    <name type="common">Inky cap fungus</name>
    <name type="synonym">Hormographiella aspergillata</name>
    <dbReference type="NCBI Taxonomy" id="240176"/>
    <lineage>
        <taxon>Eukaryota</taxon>
        <taxon>Fungi</taxon>
        <taxon>Dikarya</taxon>
        <taxon>Basidiomycota</taxon>
        <taxon>Agaricomycotina</taxon>
        <taxon>Agaricomycetes</taxon>
        <taxon>Agaricomycetidae</taxon>
        <taxon>Agaricales</taxon>
        <taxon>Agaricineae</taxon>
        <taxon>Psathyrellaceae</taxon>
        <taxon>Coprinopsis</taxon>
    </lineage>
</organism>
<sequence length="518" mass="58438">MTSTTQVLIALSSIVVAYFVKTALAKRKLNPRGLPYPPGPKGLPVIGNLTQLPQHKPWLVYKEWGRTYGDLMYLEAMGQPMIIINSLSRALDLLDKRAVNYSDRPHVPTMDLCVLMKLDWVFAFMQYGADWRNHRRAFHQYLNHNMVHNYHPIQEQETQEFLRALIARPKDFLAHTRHLFGSIIIRISYGFEDEEYNKVLVEEAEALASGFSESIIPGRYLVNAFPFLRHVPSWLPGAGFQRTMQYLRKISEKTLSEPFDNVKEALKTGNRQVGPSLAVGLIESLPDETHANRTSLEVVARNTSALSYIAGADTTVSSAQALILALAMHPEVQRKAQKEIDSVVGTDRLPNMSDKPNMPYVQAIVKEAGRWHTVLPLGFIHVSAKEDEYDGYFIPKGSFIFVNTWAIMHDPDVFKNPLQFNPERYLKNGQIDTSVLDPEAATFGFGRRICPGRWLSNDSLFLMAASLLATFNIAAPKDRTGKPIPLSLDTSSHLITAPLPYDCEFQLRSPKYAALLQK</sequence>
<proteinExistence type="evidence at protein level"/>
<keyword id="KW-0325">Glycoprotein</keyword>
<keyword id="KW-0349">Heme</keyword>
<keyword id="KW-0408">Iron</keyword>
<keyword id="KW-0472">Membrane</keyword>
<keyword id="KW-0479">Metal-binding</keyword>
<keyword id="KW-0503">Monooxygenase</keyword>
<keyword id="KW-0560">Oxidoreductase</keyword>
<keyword id="KW-1185">Reference proteome</keyword>
<keyword id="KW-0812">Transmembrane</keyword>
<keyword id="KW-1133">Transmembrane helix</keyword>
<feature type="chain" id="PRO_0000444637" description="Cytochrome P450 monooxygenase COX1">
    <location>
        <begin position="1"/>
        <end position="518"/>
    </location>
</feature>
<feature type="transmembrane region" description="Helical" evidence="2">
    <location>
        <begin position="7"/>
        <end position="25"/>
    </location>
</feature>
<feature type="binding site" description="axial binding residue" evidence="1">
    <location>
        <position position="450"/>
    </location>
    <ligand>
        <name>heme</name>
        <dbReference type="ChEBI" id="CHEBI:30413"/>
    </ligand>
    <ligandPart>
        <name>Fe</name>
        <dbReference type="ChEBI" id="CHEBI:18248"/>
    </ligandPart>
</feature>
<feature type="glycosylation site" description="N-linked (GlcNAc...) asparagine" evidence="3">
    <location>
        <position position="48"/>
    </location>
</feature>
<feature type="glycosylation site" description="N-linked (GlcNAc...) asparagine" evidence="3">
    <location>
        <position position="100"/>
    </location>
</feature>
<feature type="glycosylation site" description="N-linked (GlcNAc...) asparagine" evidence="3">
    <location>
        <position position="292"/>
    </location>
</feature>
<feature type="glycosylation site" description="N-linked (GlcNAc...) asparagine" evidence="3">
    <location>
        <position position="302"/>
    </location>
</feature>
<feature type="glycosylation site" description="N-linked (GlcNAc...) asparagine" evidence="3">
    <location>
        <position position="351"/>
    </location>
</feature>
<feature type="glycosylation site" description="N-linked (GlcNAc...) asparagine" evidence="3">
    <location>
        <position position="457"/>
    </location>
</feature>
<comment type="function">
    <text evidence="4 5">Cytochrome P450 monooxygenase; part of the gene cluster that mediates the biosynthesis of alpha-cuprenene and oxidized derivatives (PubMed:19400802). The alpha-cuprenene synthase COP6 is the only sesquiterpene synthase identified in C.cinereus that appears to be part of a biosynthetic gene cluster and is highly specific since it catalyzes the cyclization of (2E,6E)-farnesyl diphosphate into only one product, alpha-cuprenene (PubMed:19400802, PubMed:20419721). The cytochrome P450 monooxygenase COX2 then oxidizes the cyclohexadiene ring of alpha-cuprenene at positions 1 and 4, yielding first alpha-cuparene, followed by alpha-cuparophenol and a further yet unidentified compound resulting from one additional oxidation step (PubMed:19400802). The cytochrome P450 monooxygenase COX1 then likely catalyzes the oxidation at position 9 of the pentane ring of alpha-cuprenene to give the corresponding hydroxy or ketone derivatives (PubMed:19400802).</text>
</comment>
<comment type="cofactor">
    <cofactor evidence="1">
        <name>heme</name>
        <dbReference type="ChEBI" id="CHEBI:30413"/>
    </cofactor>
</comment>
<comment type="pathway">
    <text evidence="4">Secondary metabolite biosynthesis.</text>
</comment>
<comment type="subcellular location">
    <subcellularLocation>
        <location evidence="2">Membrane</location>
        <topology evidence="2">Single-pass membrane protein</topology>
    </subcellularLocation>
</comment>
<comment type="similarity">
    <text evidence="7">Belongs to the cytochrome P450 family.</text>
</comment>